<sequence>MKMTRRAFVKANAAASAAAVAGVTLPASATNLIVSSDQTKIKWDKAPCRFCGTGCSVLVGTQNGRVVATQGDPEAPVNKGLNCIKGYFLSKIMYGKDRVQTPMLRMKDGQYNKDGDFAPVSWDVALDTMAEKWKAALKKHGPTGVGMFGSGQWTVMEGYAAVKLMKAGFRSNNIDPNARHCMASAVGAFMRTFGIDEPMGCYDDFENADSFVLWGSNMAEMHPVLWTRISDRRLSHPHVKVNVLSTYYHRSFELADKGYIFEPQSDLAIANFIANYIIQNNAVNWDFVNKHTNFKQATTDIGYGLRDDDPIQMEAANPNSGAMSSISFEEYKKSVAPYTAQKASEMSGVSEEDLITLAKQYADPKTKVMSLWTMGMNQHTRGVWMNSLVYNIHLLTGKIATPGNSPFSLTGQPSACGTAREVGTFSHRLPADMVVANPKHRAISEKIWKLPEGTLNGKPGAHAVVQDRMLKDGKINAYWVMCNNNMQAGPNINTERLPGYRNPENFIVCSDPYPTATAQAADLILPTAMWVEKEGAYGNAERRTQAWYQQVQAKGEAKSDLWQIMEFSKRFKVEEVWGEELVAKAPEYRGKTMYDILFKNGQVDAFPLSEAQELNDDAKAQGFYVQKGLFEEYASFGRGHGHDLAPYDTYHTVRGLRWPVVDGKETLWRFKEGSDPYAKKGSDWDFYGKPDGKALIISAPYEAPPEVPNDEFDMWLCTGRVLEHWHTGTMTRRVPELYKAVPDALCYIHPADAKKRNLRRGDEVLISNKRGEVRVRVETRGRNRPPEGLVFVPFFDARILINKLILDATDPLSKQTDFKKCPVKITKIA</sequence>
<name>NAPA_ALIFM</name>
<gene>
    <name evidence="1" type="primary">napA</name>
    <name type="ordered locus">VFMJ11_2039</name>
</gene>
<protein>
    <recommendedName>
        <fullName evidence="1">Periplasmic nitrate reductase</fullName>
        <ecNumber evidence="1">1.9.6.1</ecNumber>
    </recommendedName>
</protein>
<comment type="function">
    <text evidence="1">Catalytic subunit of the periplasmic nitrate reductase complex NapAB. Receives electrons from NapB and catalyzes the reduction of nitrate to nitrite.</text>
</comment>
<comment type="catalytic activity">
    <reaction evidence="1">
        <text>2 Fe(II)-[cytochrome] + nitrate + 2 H(+) = 2 Fe(III)-[cytochrome] + nitrite + H2O</text>
        <dbReference type="Rhea" id="RHEA:12909"/>
        <dbReference type="Rhea" id="RHEA-COMP:11777"/>
        <dbReference type="Rhea" id="RHEA-COMP:11778"/>
        <dbReference type="ChEBI" id="CHEBI:15377"/>
        <dbReference type="ChEBI" id="CHEBI:15378"/>
        <dbReference type="ChEBI" id="CHEBI:16301"/>
        <dbReference type="ChEBI" id="CHEBI:17632"/>
        <dbReference type="ChEBI" id="CHEBI:29033"/>
        <dbReference type="ChEBI" id="CHEBI:29034"/>
        <dbReference type="EC" id="1.9.6.1"/>
    </reaction>
</comment>
<comment type="cofactor">
    <cofactor evidence="1">
        <name>[4Fe-4S] cluster</name>
        <dbReference type="ChEBI" id="CHEBI:49883"/>
    </cofactor>
    <text evidence="1">Binds 1 [4Fe-4S] cluster.</text>
</comment>
<comment type="cofactor">
    <cofactor evidence="1">
        <name>Mo-bis(molybdopterin guanine dinucleotide)</name>
        <dbReference type="ChEBI" id="CHEBI:60539"/>
    </cofactor>
    <text evidence="1">Binds 1 molybdenum-bis(molybdopterin guanine dinucleotide) (Mo-bis-MGD) cofactor per subunit.</text>
</comment>
<comment type="subunit">
    <text evidence="1">Component of the periplasmic nitrate reductase NapAB complex composed of NapA and NapB.</text>
</comment>
<comment type="subcellular location">
    <subcellularLocation>
        <location evidence="1">Periplasm</location>
    </subcellularLocation>
</comment>
<comment type="PTM">
    <text evidence="1">Predicted to be exported by the Tat system. The position of the signal peptide cleavage has not been experimentally proven.</text>
</comment>
<comment type="similarity">
    <text evidence="1">Belongs to the prokaryotic molybdopterin-containing oxidoreductase family. NasA/NapA/NarB subfamily.</text>
</comment>
<evidence type="ECO:0000255" key="1">
    <source>
        <dbReference type="HAMAP-Rule" id="MF_01630"/>
    </source>
</evidence>
<dbReference type="EC" id="1.9.6.1" evidence="1"/>
<dbReference type="EMBL" id="CP001139">
    <property type="protein sequence ID" value="ACH65259.1"/>
    <property type="molecule type" value="Genomic_DNA"/>
</dbReference>
<dbReference type="RefSeq" id="WP_012532927.1">
    <property type="nucleotide sequence ID" value="NC_011184.1"/>
</dbReference>
<dbReference type="SMR" id="B5FGW1"/>
<dbReference type="KEGG" id="vfm:VFMJ11_2039"/>
<dbReference type="HOGENOM" id="CLU_000422_13_4_6"/>
<dbReference type="Proteomes" id="UP000001857">
    <property type="component" value="Chromosome I"/>
</dbReference>
<dbReference type="GO" id="GO:0016020">
    <property type="term" value="C:membrane"/>
    <property type="evidence" value="ECO:0007669"/>
    <property type="project" value="TreeGrafter"/>
</dbReference>
<dbReference type="GO" id="GO:0009325">
    <property type="term" value="C:nitrate reductase complex"/>
    <property type="evidence" value="ECO:0007669"/>
    <property type="project" value="TreeGrafter"/>
</dbReference>
<dbReference type="GO" id="GO:0042597">
    <property type="term" value="C:periplasmic space"/>
    <property type="evidence" value="ECO:0007669"/>
    <property type="project" value="UniProtKB-SubCell"/>
</dbReference>
<dbReference type="GO" id="GO:0051539">
    <property type="term" value="F:4 iron, 4 sulfur cluster binding"/>
    <property type="evidence" value="ECO:0007669"/>
    <property type="project" value="UniProtKB-KW"/>
</dbReference>
<dbReference type="GO" id="GO:0009055">
    <property type="term" value="F:electron transfer activity"/>
    <property type="evidence" value="ECO:0007669"/>
    <property type="project" value="UniProtKB-UniRule"/>
</dbReference>
<dbReference type="GO" id="GO:0005506">
    <property type="term" value="F:iron ion binding"/>
    <property type="evidence" value="ECO:0007669"/>
    <property type="project" value="UniProtKB-UniRule"/>
</dbReference>
<dbReference type="GO" id="GO:0030151">
    <property type="term" value="F:molybdenum ion binding"/>
    <property type="evidence" value="ECO:0007669"/>
    <property type="project" value="InterPro"/>
</dbReference>
<dbReference type="GO" id="GO:0043546">
    <property type="term" value="F:molybdopterin cofactor binding"/>
    <property type="evidence" value="ECO:0007669"/>
    <property type="project" value="InterPro"/>
</dbReference>
<dbReference type="GO" id="GO:0050140">
    <property type="term" value="F:nitrate reductase (cytochrome) activity"/>
    <property type="evidence" value="ECO:0007669"/>
    <property type="project" value="UniProtKB-EC"/>
</dbReference>
<dbReference type="GO" id="GO:0045333">
    <property type="term" value="P:cellular respiration"/>
    <property type="evidence" value="ECO:0007669"/>
    <property type="project" value="UniProtKB-ARBA"/>
</dbReference>
<dbReference type="GO" id="GO:0006777">
    <property type="term" value="P:Mo-molybdopterin cofactor biosynthetic process"/>
    <property type="evidence" value="ECO:0007669"/>
    <property type="project" value="UniProtKB-UniRule"/>
</dbReference>
<dbReference type="GO" id="GO:0042128">
    <property type="term" value="P:nitrate assimilation"/>
    <property type="evidence" value="ECO:0007669"/>
    <property type="project" value="UniProtKB-UniRule"/>
</dbReference>
<dbReference type="CDD" id="cd02791">
    <property type="entry name" value="MopB_CT_Nitrate-R-NapA-like"/>
    <property type="match status" value="1"/>
</dbReference>
<dbReference type="CDD" id="cd02754">
    <property type="entry name" value="MopB_Nitrate-R-NapA-like"/>
    <property type="match status" value="1"/>
</dbReference>
<dbReference type="FunFam" id="2.40.40.20:FF:000005">
    <property type="entry name" value="Periplasmic nitrate reductase"/>
    <property type="match status" value="1"/>
</dbReference>
<dbReference type="Gene3D" id="2.40.40.20">
    <property type="match status" value="1"/>
</dbReference>
<dbReference type="Gene3D" id="3.30.200.210">
    <property type="match status" value="1"/>
</dbReference>
<dbReference type="Gene3D" id="3.40.50.740">
    <property type="match status" value="1"/>
</dbReference>
<dbReference type="Gene3D" id="3.40.228.10">
    <property type="entry name" value="Dimethylsulfoxide Reductase, domain 2"/>
    <property type="match status" value="1"/>
</dbReference>
<dbReference type="HAMAP" id="MF_01630">
    <property type="entry name" value="Nitrate_reduct_NapA"/>
    <property type="match status" value="1"/>
</dbReference>
<dbReference type="InterPro" id="IPR009010">
    <property type="entry name" value="Asp_de-COase-like_dom_sf"/>
</dbReference>
<dbReference type="InterPro" id="IPR041957">
    <property type="entry name" value="CT_Nitrate-R-NapA-like"/>
</dbReference>
<dbReference type="InterPro" id="IPR006657">
    <property type="entry name" value="MoPterin_dinucl-bd_dom"/>
</dbReference>
<dbReference type="InterPro" id="IPR006656">
    <property type="entry name" value="Mopterin_OxRdtase"/>
</dbReference>
<dbReference type="InterPro" id="IPR006963">
    <property type="entry name" value="Mopterin_OxRdtase_4Fe-4S_dom"/>
</dbReference>
<dbReference type="InterPro" id="IPR027467">
    <property type="entry name" value="MopterinOxRdtase_cofactor_BS"/>
</dbReference>
<dbReference type="InterPro" id="IPR010051">
    <property type="entry name" value="Periplasm_NO3_reductase_lsu"/>
</dbReference>
<dbReference type="InterPro" id="IPR050123">
    <property type="entry name" value="Prok_molybdopt-oxidoreductase"/>
</dbReference>
<dbReference type="InterPro" id="IPR006311">
    <property type="entry name" value="TAT_signal"/>
</dbReference>
<dbReference type="NCBIfam" id="TIGR01706">
    <property type="entry name" value="NAPA"/>
    <property type="match status" value="1"/>
</dbReference>
<dbReference type="NCBIfam" id="NF010055">
    <property type="entry name" value="PRK13532.1"/>
    <property type="match status" value="1"/>
</dbReference>
<dbReference type="PANTHER" id="PTHR43105:SF11">
    <property type="entry name" value="PERIPLASMIC NITRATE REDUCTASE"/>
    <property type="match status" value="1"/>
</dbReference>
<dbReference type="PANTHER" id="PTHR43105">
    <property type="entry name" value="RESPIRATORY NITRATE REDUCTASE"/>
    <property type="match status" value="1"/>
</dbReference>
<dbReference type="Pfam" id="PF04879">
    <property type="entry name" value="Molybdop_Fe4S4"/>
    <property type="match status" value="1"/>
</dbReference>
<dbReference type="Pfam" id="PF00384">
    <property type="entry name" value="Molybdopterin"/>
    <property type="match status" value="1"/>
</dbReference>
<dbReference type="Pfam" id="PF01568">
    <property type="entry name" value="Molydop_binding"/>
    <property type="match status" value="1"/>
</dbReference>
<dbReference type="SMART" id="SM00926">
    <property type="entry name" value="Molybdop_Fe4S4"/>
    <property type="match status" value="1"/>
</dbReference>
<dbReference type="SUPFAM" id="SSF50692">
    <property type="entry name" value="ADC-like"/>
    <property type="match status" value="1"/>
</dbReference>
<dbReference type="SUPFAM" id="SSF53706">
    <property type="entry name" value="Formate dehydrogenase/DMSO reductase, domains 1-3"/>
    <property type="match status" value="1"/>
</dbReference>
<dbReference type="PROSITE" id="PS51669">
    <property type="entry name" value="4FE4S_MOW_BIS_MGD"/>
    <property type="match status" value="1"/>
</dbReference>
<dbReference type="PROSITE" id="PS00551">
    <property type="entry name" value="MOLYBDOPTERIN_PROK_1"/>
    <property type="match status" value="1"/>
</dbReference>
<dbReference type="PROSITE" id="PS51318">
    <property type="entry name" value="TAT"/>
    <property type="match status" value="1"/>
</dbReference>
<feature type="signal peptide" description="Tat-type signal" evidence="1">
    <location>
        <begin position="1"/>
        <end position="29"/>
    </location>
</feature>
<feature type="chain" id="PRO_1000186378" description="Periplasmic nitrate reductase" evidence="1">
    <location>
        <begin position="30"/>
        <end position="829"/>
    </location>
</feature>
<feature type="domain" description="4Fe-4S Mo/W bis-MGD-type" evidence="1">
    <location>
        <begin position="41"/>
        <end position="97"/>
    </location>
</feature>
<feature type="binding site" evidence="1">
    <location>
        <position position="48"/>
    </location>
    <ligand>
        <name>[4Fe-4S] cluster</name>
        <dbReference type="ChEBI" id="CHEBI:49883"/>
    </ligand>
</feature>
<feature type="binding site" evidence="1">
    <location>
        <position position="51"/>
    </location>
    <ligand>
        <name>[4Fe-4S] cluster</name>
        <dbReference type="ChEBI" id="CHEBI:49883"/>
    </ligand>
</feature>
<feature type="binding site" evidence="1">
    <location>
        <position position="55"/>
    </location>
    <ligand>
        <name>[4Fe-4S] cluster</name>
        <dbReference type="ChEBI" id="CHEBI:49883"/>
    </ligand>
</feature>
<feature type="binding site" evidence="1">
    <location>
        <position position="83"/>
    </location>
    <ligand>
        <name>[4Fe-4S] cluster</name>
        <dbReference type="ChEBI" id="CHEBI:49883"/>
    </ligand>
</feature>
<feature type="binding site" evidence="1">
    <location>
        <position position="85"/>
    </location>
    <ligand>
        <name>Mo-bis(molybdopterin guanine dinucleotide)</name>
        <dbReference type="ChEBI" id="CHEBI:60539"/>
    </ligand>
</feature>
<feature type="binding site" evidence="1">
    <location>
        <position position="152"/>
    </location>
    <ligand>
        <name>Mo-bis(molybdopterin guanine dinucleotide)</name>
        <dbReference type="ChEBI" id="CHEBI:60539"/>
    </ligand>
</feature>
<feature type="binding site" evidence="1">
    <location>
        <position position="177"/>
    </location>
    <ligand>
        <name>Mo-bis(molybdopterin guanine dinucleotide)</name>
        <dbReference type="ChEBI" id="CHEBI:60539"/>
    </ligand>
</feature>
<feature type="binding site" evidence="1">
    <location>
        <position position="181"/>
    </location>
    <ligand>
        <name>Mo-bis(molybdopterin guanine dinucleotide)</name>
        <dbReference type="ChEBI" id="CHEBI:60539"/>
    </ligand>
</feature>
<feature type="binding site" evidence="1">
    <location>
        <begin position="214"/>
        <end position="221"/>
    </location>
    <ligand>
        <name>Mo-bis(molybdopterin guanine dinucleotide)</name>
        <dbReference type="ChEBI" id="CHEBI:60539"/>
    </ligand>
</feature>
<feature type="binding site" evidence="1">
    <location>
        <begin position="245"/>
        <end position="249"/>
    </location>
    <ligand>
        <name>Mo-bis(molybdopterin guanine dinucleotide)</name>
        <dbReference type="ChEBI" id="CHEBI:60539"/>
    </ligand>
</feature>
<feature type="binding site" evidence="1">
    <location>
        <begin position="264"/>
        <end position="266"/>
    </location>
    <ligand>
        <name>Mo-bis(molybdopterin guanine dinucleotide)</name>
        <dbReference type="ChEBI" id="CHEBI:60539"/>
    </ligand>
</feature>
<feature type="binding site" evidence="1">
    <location>
        <position position="374"/>
    </location>
    <ligand>
        <name>Mo-bis(molybdopterin guanine dinucleotide)</name>
        <dbReference type="ChEBI" id="CHEBI:60539"/>
    </ligand>
</feature>
<feature type="binding site" evidence="1">
    <location>
        <position position="378"/>
    </location>
    <ligand>
        <name>Mo-bis(molybdopterin guanine dinucleotide)</name>
        <dbReference type="ChEBI" id="CHEBI:60539"/>
    </ligand>
</feature>
<feature type="binding site" evidence="1">
    <location>
        <position position="484"/>
    </location>
    <ligand>
        <name>Mo-bis(molybdopterin guanine dinucleotide)</name>
        <dbReference type="ChEBI" id="CHEBI:60539"/>
    </ligand>
</feature>
<feature type="binding site" evidence="1">
    <location>
        <begin position="510"/>
        <end position="511"/>
    </location>
    <ligand>
        <name>Mo-bis(molybdopterin guanine dinucleotide)</name>
        <dbReference type="ChEBI" id="CHEBI:60539"/>
    </ligand>
</feature>
<feature type="binding site" evidence="1">
    <location>
        <position position="533"/>
    </location>
    <ligand>
        <name>Mo-bis(molybdopterin guanine dinucleotide)</name>
        <dbReference type="ChEBI" id="CHEBI:60539"/>
    </ligand>
</feature>
<feature type="binding site" evidence="1">
    <location>
        <position position="560"/>
    </location>
    <ligand>
        <name>Mo-bis(molybdopterin guanine dinucleotide)</name>
        <dbReference type="ChEBI" id="CHEBI:60539"/>
    </ligand>
</feature>
<feature type="binding site" evidence="1">
    <location>
        <begin position="718"/>
        <end position="727"/>
    </location>
    <ligand>
        <name>Mo-bis(molybdopterin guanine dinucleotide)</name>
        <dbReference type="ChEBI" id="CHEBI:60539"/>
    </ligand>
</feature>
<feature type="binding site" evidence="1">
    <location>
        <position position="794"/>
    </location>
    <ligand>
        <name>substrate</name>
    </ligand>
</feature>
<feature type="binding site" evidence="1">
    <location>
        <position position="802"/>
    </location>
    <ligand>
        <name>Mo-bis(molybdopterin guanine dinucleotide)</name>
        <dbReference type="ChEBI" id="CHEBI:60539"/>
    </ligand>
</feature>
<feature type="binding site" evidence="1">
    <location>
        <position position="819"/>
    </location>
    <ligand>
        <name>Mo-bis(molybdopterin guanine dinucleotide)</name>
        <dbReference type="ChEBI" id="CHEBI:60539"/>
    </ligand>
</feature>
<keyword id="KW-0004">4Fe-4S</keyword>
<keyword id="KW-0249">Electron transport</keyword>
<keyword id="KW-0408">Iron</keyword>
<keyword id="KW-0411">Iron-sulfur</keyword>
<keyword id="KW-0479">Metal-binding</keyword>
<keyword id="KW-0500">Molybdenum</keyword>
<keyword id="KW-0534">Nitrate assimilation</keyword>
<keyword id="KW-0560">Oxidoreductase</keyword>
<keyword id="KW-0574">Periplasm</keyword>
<keyword id="KW-0732">Signal</keyword>
<keyword id="KW-0813">Transport</keyword>
<proteinExistence type="inferred from homology"/>
<accession>B5FGW1</accession>
<reference key="1">
    <citation type="submission" date="2008-08" db="EMBL/GenBank/DDBJ databases">
        <title>Complete sequence of Vibrio fischeri strain MJ11.</title>
        <authorList>
            <person name="Mandel M.J."/>
            <person name="Stabb E.V."/>
            <person name="Ruby E.G."/>
            <person name="Ferriera S."/>
            <person name="Johnson J."/>
            <person name="Kravitz S."/>
            <person name="Beeson K."/>
            <person name="Sutton G."/>
            <person name="Rogers Y.-H."/>
            <person name="Friedman R."/>
            <person name="Frazier M."/>
            <person name="Venter J.C."/>
        </authorList>
    </citation>
    <scope>NUCLEOTIDE SEQUENCE [LARGE SCALE GENOMIC DNA]</scope>
    <source>
        <strain>MJ11</strain>
    </source>
</reference>
<organism>
    <name type="scientific">Aliivibrio fischeri (strain MJ11)</name>
    <name type="common">Vibrio fischeri</name>
    <dbReference type="NCBI Taxonomy" id="388396"/>
    <lineage>
        <taxon>Bacteria</taxon>
        <taxon>Pseudomonadati</taxon>
        <taxon>Pseudomonadota</taxon>
        <taxon>Gammaproteobacteria</taxon>
        <taxon>Vibrionales</taxon>
        <taxon>Vibrionaceae</taxon>
        <taxon>Aliivibrio</taxon>
    </lineage>
</organism>